<organism>
    <name type="scientific">Vibrio parahaemolyticus serotype O3:K6 (strain RIMD 2210633)</name>
    <dbReference type="NCBI Taxonomy" id="223926"/>
    <lineage>
        <taxon>Bacteria</taxon>
        <taxon>Pseudomonadati</taxon>
        <taxon>Pseudomonadota</taxon>
        <taxon>Gammaproteobacteria</taxon>
        <taxon>Vibrionales</taxon>
        <taxon>Vibrionaceae</taxon>
        <taxon>Vibrio</taxon>
    </lineage>
</organism>
<evidence type="ECO:0000255" key="1">
    <source>
        <dbReference type="PROSITE-ProRule" id="PRU00520"/>
    </source>
</evidence>
<evidence type="ECO:0000305" key="2"/>
<dbReference type="EC" id="3.6.1.7"/>
<dbReference type="EMBL" id="BA000031">
    <property type="protein sequence ID" value="BAC59890.1"/>
    <property type="molecule type" value="Genomic_DNA"/>
</dbReference>
<dbReference type="RefSeq" id="NP_798006.1">
    <property type="nucleotide sequence ID" value="NC_004603.1"/>
</dbReference>
<dbReference type="SMR" id="Q87P91"/>
<dbReference type="GeneID" id="1189134"/>
<dbReference type="KEGG" id="vpa:VP1627"/>
<dbReference type="PATRIC" id="fig|223926.6.peg.1549"/>
<dbReference type="eggNOG" id="COG1254">
    <property type="taxonomic scope" value="Bacteria"/>
</dbReference>
<dbReference type="HOGENOM" id="CLU_141932_1_2_6"/>
<dbReference type="Proteomes" id="UP000002493">
    <property type="component" value="Chromosome 1"/>
</dbReference>
<dbReference type="GO" id="GO:0003998">
    <property type="term" value="F:acylphosphatase activity"/>
    <property type="evidence" value="ECO:0007669"/>
    <property type="project" value="UniProtKB-EC"/>
</dbReference>
<dbReference type="Gene3D" id="3.30.70.100">
    <property type="match status" value="1"/>
</dbReference>
<dbReference type="InterPro" id="IPR020456">
    <property type="entry name" value="Acylphosphatase"/>
</dbReference>
<dbReference type="InterPro" id="IPR001792">
    <property type="entry name" value="Acylphosphatase-like_dom"/>
</dbReference>
<dbReference type="InterPro" id="IPR036046">
    <property type="entry name" value="Acylphosphatase-like_dom_sf"/>
</dbReference>
<dbReference type="InterPro" id="IPR017968">
    <property type="entry name" value="Acylphosphatase_CS"/>
</dbReference>
<dbReference type="NCBIfam" id="NF011000">
    <property type="entry name" value="PRK14426.1"/>
    <property type="match status" value="1"/>
</dbReference>
<dbReference type="PANTHER" id="PTHR47268">
    <property type="entry name" value="ACYLPHOSPHATASE"/>
    <property type="match status" value="1"/>
</dbReference>
<dbReference type="PANTHER" id="PTHR47268:SF4">
    <property type="entry name" value="ACYLPHOSPHATASE"/>
    <property type="match status" value="1"/>
</dbReference>
<dbReference type="Pfam" id="PF00708">
    <property type="entry name" value="Acylphosphatase"/>
    <property type="match status" value="1"/>
</dbReference>
<dbReference type="SUPFAM" id="SSF54975">
    <property type="entry name" value="Acylphosphatase/BLUF domain-like"/>
    <property type="match status" value="1"/>
</dbReference>
<dbReference type="PROSITE" id="PS00150">
    <property type="entry name" value="ACYLPHOSPHATASE_1"/>
    <property type="match status" value="1"/>
</dbReference>
<dbReference type="PROSITE" id="PS00151">
    <property type="entry name" value="ACYLPHOSPHATASE_2"/>
    <property type="match status" value="1"/>
</dbReference>
<dbReference type="PROSITE" id="PS51160">
    <property type="entry name" value="ACYLPHOSPHATASE_3"/>
    <property type="match status" value="1"/>
</dbReference>
<feature type="chain" id="PRO_0000326842" description="Acylphosphatase">
    <location>
        <begin position="1"/>
        <end position="90"/>
    </location>
</feature>
<feature type="domain" description="Acylphosphatase-like" evidence="1">
    <location>
        <begin position="5"/>
        <end position="90"/>
    </location>
</feature>
<feature type="active site" evidence="1">
    <location>
        <position position="20"/>
    </location>
</feature>
<feature type="active site" evidence="1">
    <location>
        <position position="38"/>
    </location>
</feature>
<comment type="catalytic activity">
    <reaction>
        <text>an acyl phosphate + H2O = a carboxylate + phosphate + H(+)</text>
        <dbReference type="Rhea" id="RHEA:14965"/>
        <dbReference type="ChEBI" id="CHEBI:15377"/>
        <dbReference type="ChEBI" id="CHEBI:15378"/>
        <dbReference type="ChEBI" id="CHEBI:29067"/>
        <dbReference type="ChEBI" id="CHEBI:43474"/>
        <dbReference type="ChEBI" id="CHEBI:59918"/>
        <dbReference type="EC" id="3.6.1.7"/>
    </reaction>
</comment>
<comment type="similarity">
    <text evidence="2">Belongs to the acylphosphatase family.</text>
</comment>
<keyword id="KW-0378">Hydrolase</keyword>
<sequence>MNVKCERFIVKGHVQGVGFRYHTSHQGLKLGLTGYAKNLNNGDVEVMACGPKEKIDQFCEWLQEGPRTATVESVTRESVSYKPFRGFKIL</sequence>
<protein>
    <recommendedName>
        <fullName>Acylphosphatase</fullName>
        <ecNumber>3.6.1.7</ecNumber>
    </recommendedName>
    <alternativeName>
        <fullName>Acylphosphate phosphohydrolase</fullName>
    </alternativeName>
</protein>
<gene>
    <name type="primary">acyP</name>
    <name type="ordered locus">VP1627</name>
</gene>
<reference key="1">
    <citation type="journal article" date="2003" name="Lancet">
        <title>Genome sequence of Vibrio parahaemolyticus: a pathogenic mechanism distinct from that of V. cholerae.</title>
        <authorList>
            <person name="Makino K."/>
            <person name="Oshima K."/>
            <person name="Kurokawa K."/>
            <person name="Yokoyama K."/>
            <person name="Uda T."/>
            <person name="Tagomori K."/>
            <person name="Iijima Y."/>
            <person name="Najima M."/>
            <person name="Nakano M."/>
            <person name="Yamashita A."/>
            <person name="Kubota Y."/>
            <person name="Kimura S."/>
            <person name="Yasunaga T."/>
            <person name="Honda T."/>
            <person name="Shinagawa H."/>
            <person name="Hattori M."/>
            <person name="Iida T."/>
        </authorList>
    </citation>
    <scope>NUCLEOTIDE SEQUENCE [LARGE SCALE GENOMIC DNA]</scope>
    <source>
        <strain>RIMD 2210633</strain>
    </source>
</reference>
<name>ACYP_VIBPA</name>
<proteinExistence type="inferred from homology"/>
<accession>Q87P91</accession>